<evidence type="ECO:0000255" key="1">
    <source>
        <dbReference type="HAMAP-Rule" id="MF_01212"/>
    </source>
</evidence>
<evidence type="ECO:0000255" key="2">
    <source>
        <dbReference type="PROSITE-ProRule" id="PRU01175"/>
    </source>
</evidence>
<evidence type="ECO:0000256" key="3">
    <source>
        <dbReference type="SAM" id="MobiDB-lite"/>
    </source>
</evidence>
<reference key="1">
    <citation type="journal article" date="1998" name="J. Bacteriol.">
        <title>Characterization of the dnaG locus in Mycobacterium smegmatis reveals linkage of DNA replication and cell division.</title>
        <authorList>
            <person name="Klann A.G."/>
            <person name="Belanger A.E."/>
            <person name="Abanes-De Mello A."/>
            <person name="Lee J.Y."/>
            <person name="Hatfull G.F."/>
        </authorList>
    </citation>
    <scope>NUCLEOTIDE SEQUENCE [GENOMIC DNA]</scope>
</reference>
<reference key="2">
    <citation type="submission" date="2006-10" db="EMBL/GenBank/DDBJ databases">
        <authorList>
            <person name="Fleischmann R.D."/>
            <person name="Dodson R.J."/>
            <person name="Haft D.H."/>
            <person name="Merkel J.S."/>
            <person name="Nelson W.C."/>
            <person name="Fraser C.M."/>
        </authorList>
    </citation>
    <scope>NUCLEOTIDE SEQUENCE [LARGE SCALE GENOMIC DNA]</scope>
    <source>
        <strain>ATCC 700084 / mc(2)155</strain>
    </source>
</reference>
<reference key="3">
    <citation type="journal article" date="2007" name="Genome Biol.">
        <title>Interrupted coding sequences in Mycobacterium smegmatis: authentic mutations or sequencing errors?</title>
        <authorList>
            <person name="Deshayes C."/>
            <person name="Perrodou E."/>
            <person name="Gallien S."/>
            <person name="Euphrasie D."/>
            <person name="Schaeffer C."/>
            <person name="Van-Dorsselaer A."/>
            <person name="Poch O."/>
            <person name="Lecompte O."/>
            <person name="Reyrat J.-M."/>
        </authorList>
    </citation>
    <scope>NUCLEOTIDE SEQUENCE [LARGE SCALE GENOMIC DNA]</scope>
    <source>
        <strain>ATCC 700084 / mc(2)155</strain>
    </source>
</reference>
<reference key="4">
    <citation type="journal article" date="2009" name="Genome Res.">
        <title>Ortho-proteogenomics: multiple proteomes investigation through orthology and a new MS-based protocol.</title>
        <authorList>
            <person name="Gallien S."/>
            <person name="Perrodou E."/>
            <person name="Carapito C."/>
            <person name="Deshayes C."/>
            <person name="Reyrat J.-M."/>
            <person name="Van Dorsselaer A."/>
            <person name="Poch O."/>
            <person name="Schaeffer C."/>
            <person name="Lecompte O."/>
        </authorList>
    </citation>
    <scope>NUCLEOTIDE SEQUENCE [LARGE SCALE GENOMIC DNA]</scope>
    <source>
        <strain>ATCC 700084 / mc(2)155</strain>
    </source>
</reference>
<dbReference type="EMBL" id="AF027507">
    <property type="protein sequence ID" value="AAB96634.1"/>
    <property type="molecule type" value="Genomic_DNA"/>
</dbReference>
<dbReference type="EMBL" id="CP000480">
    <property type="protein sequence ID" value="ABK72246.1"/>
    <property type="molecule type" value="Genomic_DNA"/>
</dbReference>
<dbReference type="EMBL" id="CP001663">
    <property type="protein sequence ID" value="AFP40826.1"/>
    <property type="molecule type" value="Genomic_DNA"/>
</dbReference>
<dbReference type="RefSeq" id="WP_003895838.1">
    <property type="nucleotide sequence ID" value="NZ_SIJM01000026.1"/>
</dbReference>
<dbReference type="RefSeq" id="YP_888755.1">
    <property type="nucleotide sequence ID" value="NC_008596.1"/>
</dbReference>
<dbReference type="SMR" id="O52199"/>
<dbReference type="STRING" id="246196.MSMEG_4483"/>
<dbReference type="PaxDb" id="246196-MSMEI_4372"/>
<dbReference type="KEGG" id="msb:LJ00_22180"/>
<dbReference type="KEGG" id="msg:MSMEI_4372"/>
<dbReference type="KEGG" id="msm:MSMEG_4483"/>
<dbReference type="PATRIC" id="fig|246196.19.peg.4389"/>
<dbReference type="eggNOG" id="COG0232">
    <property type="taxonomic scope" value="Bacteria"/>
</dbReference>
<dbReference type="OrthoDB" id="9803619at2"/>
<dbReference type="Proteomes" id="UP000000757">
    <property type="component" value="Chromosome"/>
</dbReference>
<dbReference type="Proteomes" id="UP000006158">
    <property type="component" value="Chromosome"/>
</dbReference>
<dbReference type="GO" id="GO:0008832">
    <property type="term" value="F:dGTPase activity"/>
    <property type="evidence" value="ECO:0007669"/>
    <property type="project" value="TreeGrafter"/>
</dbReference>
<dbReference type="GO" id="GO:0006203">
    <property type="term" value="P:dGTP catabolic process"/>
    <property type="evidence" value="ECO:0007669"/>
    <property type="project" value="TreeGrafter"/>
</dbReference>
<dbReference type="CDD" id="cd00077">
    <property type="entry name" value="HDc"/>
    <property type="match status" value="1"/>
</dbReference>
<dbReference type="Gene3D" id="1.10.3210.10">
    <property type="entry name" value="Hypothetical protein af1432"/>
    <property type="match status" value="1"/>
</dbReference>
<dbReference type="HAMAP" id="MF_01212">
    <property type="entry name" value="dGTPase_type2"/>
    <property type="match status" value="1"/>
</dbReference>
<dbReference type="InterPro" id="IPR006261">
    <property type="entry name" value="dGTPase"/>
</dbReference>
<dbReference type="InterPro" id="IPR050135">
    <property type="entry name" value="dGTPase-like"/>
</dbReference>
<dbReference type="InterPro" id="IPR023023">
    <property type="entry name" value="dNTPase_2"/>
</dbReference>
<dbReference type="InterPro" id="IPR003607">
    <property type="entry name" value="HD/PDEase_dom"/>
</dbReference>
<dbReference type="InterPro" id="IPR006674">
    <property type="entry name" value="HD_domain"/>
</dbReference>
<dbReference type="InterPro" id="IPR026875">
    <property type="entry name" value="PHydrolase_assoc_dom"/>
</dbReference>
<dbReference type="NCBIfam" id="TIGR01353">
    <property type="entry name" value="dGTP_triPase"/>
    <property type="match status" value="1"/>
</dbReference>
<dbReference type="NCBIfam" id="NF002829">
    <property type="entry name" value="PRK03007.1"/>
    <property type="match status" value="1"/>
</dbReference>
<dbReference type="PANTHER" id="PTHR11373:SF32">
    <property type="entry name" value="DEOXYGUANOSINETRIPHOSPHATE TRIPHOSPHOHYDROLASE"/>
    <property type="match status" value="1"/>
</dbReference>
<dbReference type="PANTHER" id="PTHR11373">
    <property type="entry name" value="DEOXYNUCLEOSIDE TRIPHOSPHATE TRIPHOSPHOHYDROLASE"/>
    <property type="match status" value="1"/>
</dbReference>
<dbReference type="Pfam" id="PF01966">
    <property type="entry name" value="HD"/>
    <property type="match status" value="1"/>
</dbReference>
<dbReference type="Pfam" id="PF13286">
    <property type="entry name" value="HD_assoc"/>
    <property type="match status" value="1"/>
</dbReference>
<dbReference type="SMART" id="SM00471">
    <property type="entry name" value="HDc"/>
    <property type="match status" value="1"/>
</dbReference>
<dbReference type="SUPFAM" id="SSF109604">
    <property type="entry name" value="HD-domain/PDEase-like"/>
    <property type="match status" value="1"/>
</dbReference>
<dbReference type="PROSITE" id="PS51831">
    <property type="entry name" value="HD"/>
    <property type="match status" value="1"/>
</dbReference>
<protein>
    <recommendedName>
        <fullName evidence="1">Deoxyguanosinetriphosphate triphosphohydrolase-like protein</fullName>
    </recommendedName>
</protein>
<keyword id="KW-0378">Hydrolase</keyword>
<keyword id="KW-1185">Reference proteome</keyword>
<gene>
    <name type="primary">dgt</name>
    <name type="ordered locus">MSMEG_4483</name>
    <name type="ordered locus">MSMEI_4372</name>
</gene>
<accession>O52199</accession>
<accession>A0R0R7</accession>
<accession>I7GCA1</accession>
<name>DGTL1_MYCS2</name>
<organism>
    <name type="scientific">Mycolicibacterium smegmatis (strain ATCC 700084 / mc(2)155)</name>
    <name type="common">Mycobacterium smegmatis</name>
    <dbReference type="NCBI Taxonomy" id="246196"/>
    <lineage>
        <taxon>Bacteria</taxon>
        <taxon>Bacillati</taxon>
        <taxon>Actinomycetota</taxon>
        <taxon>Actinomycetes</taxon>
        <taxon>Mycobacteriales</taxon>
        <taxon>Mycobacteriaceae</taxon>
        <taxon>Mycolicibacterium</taxon>
    </lineage>
</organism>
<proteinExistence type="inferred from homology"/>
<sequence>MNATQYDHYDDFDRERLVPEPAKSAALPGTDTEHRTDFARDRARVLHCAALRRLADKTQVVGPRHGDNPRTRLTHSLEVAQIGRGMAIGLGCDPDLVDLAGLAHDIGHPPYGHNGERALNEIAKAFGGFEGNAQNFRILTRLEPKVLDADGRSAGLNLTRASLDAVTKYPWRRTEERRKFGFYVGFPDDDGPAADWVRDGAPVDRPCLEAQVMDWADDVAYSVHDVEDGVISGRIDLRVLADADAAESLAQLGAAAFPSLAHDDLLAAAQRLSEMPVVAAVGKYDGTLAASVALKRLTSELVGRFANAAITETRAVAGDRPLKRFDSDLVVPDLVRAEVAVLKMLALQFIMSDHQHLQVQADQRTRIHEVALALWAQAPGSLDPQFAPEFAAAGDDGARLRVVIDQIASYTETRLERVHEARSPRPLE</sequence>
<feature type="chain" id="PRO_0000205309" description="Deoxyguanosinetriphosphate triphosphohydrolase-like protein">
    <location>
        <begin position="1"/>
        <end position="428"/>
    </location>
</feature>
<feature type="domain" description="HD" evidence="2">
    <location>
        <begin position="72"/>
        <end position="222"/>
    </location>
</feature>
<feature type="region of interest" description="Disordered" evidence="3">
    <location>
        <begin position="1"/>
        <end position="35"/>
    </location>
</feature>
<feature type="compositionally biased region" description="Basic and acidic residues" evidence="3">
    <location>
        <begin position="7"/>
        <end position="18"/>
    </location>
</feature>
<comment type="similarity">
    <text evidence="1">Belongs to the dGTPase family. Type 2 subfamily.</text>
</comment>